<dbReference type="EC" id="2.7.1.26"/>
<dbReference type="EMBL" id="AF017096">
    <property type="protein sequence ID" value="AAC39087.1"/>
    <property type="molecule type" value="Genomic_DNA"/>
</dbReference>
<dbReference type="EMBL" id="AE014297">
    <property type="protein sequence ID" value="AAF54164.1"/>
    <property type="molecule type" value="Genomic_DNA"/>
</dbReference>
<dbReference type="EMBL" id="AY071393">
    <property type="protein sequence ID" value="AAL49015.1"/>
    <property type="molecule type" value="mRNA"/>
</dbReference>
<dbReference type="EMBL" id="AY060898">
    <property type="protein sequence ID" value="AAL28446.1"/>
    <property type="molecule type" value="mRNA"/>
</dbReference>
<dbReference type="EMBL" id="BT050515">
    <property type="protein sequence ID" value="ACJ13222.1"/>
    <property type="molecule type" value="mRNA"/>
</dbReference>
<dbReference type="RefSeq" id="NP_001287218.1">
    <property type="nucleotide sequence ID" value="NM_001300289.1"/>
</dbReference>
<dbReference type="RefSeq" id="NP_649749.2">
    <property type="nucleotide sequence ID" value="NM_141492.3"/>
</dbReference>
<dbReference type="SMR" id="O76206"/>
<dbReference type="FunCoup" id="O76206">
    <property type="interactions" value="1242"/>
</dbReference>
<dbReference type="STRING" id="7227.FBpp0081260"/>
<dbReference type="PaxDb" id="7227-FBpp0081260"/>
<dbReference type="DNASU" id="40936"/>
<dbReference type="EnsemblMetazoa" id="FBtr0081763">
    <property type="protein sequence ID" value="FBpp0081260"/>
    <property type="gene ID" value="FBgn0014930"/>
</dbReference>
<dbReference type="EnsemblMetazoa" id="FBtr0339712">
    <property type="protein sequence ID" value="FBpp0308769"/>
    <property type="gene ID" value="FBgn0014930"/>
</dbReference>
<dbReference type="GeneID" id="40936"/>
<dbReference type="KEGG" id="dme:Dmel_CG2846"/>
<dbReference type="AGR" id="FB:FBgn0014930"/>
<dbReference type="CTD" id="55312"/>
<dbReference type="FlyBase" id="FBgn0014930">
    <property type="gene designation" value="Rfk"/>
</dbReference>
<dbReference type="VEuPathDB" id="VectorBase:FBgn0014930"/>
<dbReference type="eggNOG" id="KOG3110">
    <property type="taxonomic scope" value="Eukaryota"/>
</dbReference>
<dbReference type="GeneTree" id="ENSGT00390000015537"/>
<dbReference type="HOGENOM" id="CLU_048437_3_3_1"/>
<dbReference type="InParanoid" id="O76206"/>
<dbReference type="OMA" id="NGEVHKM"/>
<dbReference type="OrthoDB" id="276388at2759"/>
<dbReference type="PhylomeDB" id="O76206"/>
<dbReference type="Reactome" id="R-DME-196843">
    <property type="pathway name" value="Vitamin B2 (riboflavin) metabolism"/>
</dbReference>
<dbReference type="UniPathway" id="UPA00276">
    <property type="reaction ID" value="UER00406"/>
</dbReference>
<dbReference type="BioGRID-ORCS" id="40936">
    <property type="hits" value="0 hits in 3 CRISPR screens"/>
</dbReference>
<dbReference type="GenomeRNAi" id="40936"/>
<dbReference type="PRO" id="PR:O76206"/>
<dbReference type="Proteomes" id="UP000000803">
    <property type="component" value="Chromosome 3R"/>
</dbReference>
<dbReference type="Bgee" id="FBgn0014930">
    <property type="expression patterns" value="Expressed in adult anterior midgut class II enteroendocrine cell in adult midgut (Drosophila) and 153 other cell types or tissues"/>
</dbReference>
<dbReference type="ExpressionAtlas" id="O76206">
    <property type="expression patterns" value="baseline and differential"/>
</dbReference>
<dbReference type="GO" id="GO:0005743">
    <property type="term" value="C:mitochondrial inner membrane"/>
    <property type="evidence" value="ECO:0000250"/>
    <property type="project" value="FlyBase"/>
</dbReference>
<dbReference type="GO" id="GO:0005739">
    <property type="term" value="C:mitochondrion"/>
    <property type="evidence" value="ECO:0000318"/>
    <property type="project" value="GO_Central"/>
</dbReference>
<dbReference type="GO" id="GO:0005524">
    <property type="term" value="F:ATP binding"/>
    <property type="evidence" value="ECO:0007669"/>
    <property type="project" value="UniProtKB-KW"/>
</dbReference>
<dbReference type="GO" id="GO:0046872">
    <property type="term" value="F:metal ion binding"/>
    <property type="evidence" value="ECO:0007669"/>
    <property type="project" value="UniProtKB-KW"/>
</dbReference>
<dbReference type="GO" id="GO:0008531">
    <property type="term" value="F:riboflavin kinase activity"/>
    <property type="evidence" value="ECO:0000250"/>
    <property type="project" value="FlyBase"/>
</dbReference>
<dbReference type="GO" id="GO:0009398">
    <property type="term" value="P:FMN biosynthetic process"/>
    <property type="evidence" value="ECO:0000250"/>
    <property type="project" value="FlyBase"/>
</dbReference>
<dbReference type="GO" id="GO:0009231">
    <property type="term" value="P:riboflavin biosynthetic process"/>
    <property type="evidence" value="ECO:0007669"/>
    <property type="project" value="InterPro"/>
</dbReference>
<dbReference type="GO" id="GO:0006771">
    <property type="term" value="P:riboflavin metabolic process"/>
    <property type="evidence" value="ECO:0000318"/>
    <property type="project" value="GO_Central"/>
</dbReference>
<dbReference type="FunFam" id="2.40.30.30:FF:000011">
    <property type="entry name" value="Putative riboflavin kinase"/>
    <property type="match status" value="1"/>
</dbReference>
<dbReference type="Gene3D" id="2.40.30.30">
    <property type="entry name" value="Riboflavin kinase-like"/>
    <property type="match status" value="1"/>
</dbReference>
<dbReference type="InterPro" id="IPR023468">
    <property type="entry name" value="Riboflavin_kinase"/>
</dbReference>
<dbReference type="InterPro" id="IPR015865">
    <property type="entry name" value="Riboflavin_kinase_bac/euk"/>
</dbReference>
<dbReference type="InterPro" id="IPR023465">
    <property type="entry name" value="Riboflavin_kinase_dom_sf"/>
</dbReference>
<dbReference type="PANTHER" id="PTHR22749:SF6">
    <property type="entry name" value="RIBOFLAVIN KINASE"/>
    <property type="match status" value="1"/>
</dbReference>
<dbReference type="PANTHER" id="PTHR22749">
    <property type="entry name" value="RIBOFLAVIN KINASE/FMN ADENYLYLTRANSFERASE"/>
    <property type="match status" value="1"/>
</dbReference>
<dbReference type="Pfam" id="PF01687">
    <property type="entry name" value="Flavokinase"/>
    <property type="match status" value="1"/>
</dbReference>
<dbReference type="SMART" id="SM00904">
    <property type="entry name" value="Flavokinase"/>
    <property type="match status" value="1"/>
</dbReference>
<dbReference type="SUPFAM" id="SSF82114">
    <property type="entry name" value="Riboflavin kinase-like"/>
    <property type="match status" value="1"/>
</dbReference>
<protein>
    <recommendedName>
        <fullName>Putative riboflavin kinase</fullName>
        <ecNumber>2.7.1.26</ecNumber>
    </recommendedName>
    <alternativeName>
        <fullName>ATP:riboflavin 5'-phosphotransferase</fullName>
    </alternativeName>
    <alternativeName>
        <fullName>Flavokinase</fullName>
    </alternativeName>
</protein>
<reference evidence="6" key="1">
    <citation type="journal article" date="1998" name="Chromosoma">
        <title>Repetitive arrays containing a housekeeping gene promoter have altered polytene chromosome morphology in Drosophila.</title>
        <authorList>
            <person name="Clark D.V."/>
            <person name="Sabl J.F."/>
            <person name="Henikoff S."/>
        </authorList>
    </citation>
    <scope>NUCLEOTIDE SEQUENCE [GENOMIC DNA]</scope>
    <source>
        <strain evidence="5">Canton-S</strain>
    </source>
</reference>
<reference evidence="6" key="2">
    <citation type="journal article" date="2000" name="Science">
        <title>The genome sequence of Drosophila melanogaster.</title>
        <authorList>
            <person name="Adams M.D."/>
            <person name="Celniker S.E."/>
            <person name="Holt R.A."/>
            <person name="Evans C.A."/>
            <person name="Gocayne J.D."/>
            <person name="Amanatides P.G."/>
            <person name="Scherer S.E."/>
            <person name="Li P.W."/>
            <person name="Hoskins R.A."/>
            <person name="Galle R.F."/>
            <person name="George R.A."/>
            <person name="Lewis S.E."/>
            <person name="Richards S."/>
            <person name="Ashburner M."/>
            <person name="Henderson S.N."/>
            <person name="Sutton G.G."/>
            <person name="Wortman J.R."/>
            <person name="Yandell M.D."/>
            <person name="Zhang Q."/>
            <person name="Chen L.X."/>
            <person name="Brandon R.C."/>
            <person name="Rogers Y.-H.C."/>
            <person name="Blazej R.G."/>
            <person name="Champe M."/>
            <person name="Pfeiffer B.D."/>
            <person name="Wan K.H."/>
            <person name="Doyle C."/>
            <person name="Baxter E.G."/>
            <person name="Helt G."/>
            <person name="Nelson C.R."/>
            <person name="Miklos G.L.G."/>
            <person name="Abril J.F."/>
            <person name="Agbayani A."/>
            <person name="An H.-J."/>
            <person name="Andrews-Pfannkoch C."/>
            <person name="Baldwin D."/>
            <person name="Ballew R.M."/>
            <person name="Basu A."/>
            <person name="Baxendale J."/>
            <person name="Bayraktaroglu L."/>
            <person name="Beasley E.M."/>
            <person name="Beeson K.Y."/>
            <person name="Benos P.V."/>
            <person name="Berman B.P."/>
            <person name="Bhandari D."/>
            <person name="Bolshakov S."/>
            <person name="Borkova D."/>
            <person name="Botchan M.R."/>
            <person name="Bouck J."/>
            <person name="Brokstein P."/>
            <person name="Brottier P."/>
            <person name="Burtis K.C."/>
            <person name="Busam D.A."/>
            <person name="Butler H."/>
            <person name="Cadieu E."/>
            <person name="Center A."/>
            <person name="Chandra I."/>
            <person name="Cherry J.M."/>
            <person name="Cawley S."/>
            <person name="Dahlke C."/>
            <person name="Davenport L.B."/>
            <person name="Davies P."/>
            <person name="de Pablos B."/>
            <person name="Delcher A."/>
            <person name="Deng Z."/>
            <person name="Mays A.D."/>
            <person name="Dew I."/>
            <person name="Dietz S.M."/>
            <person name="Dodson K."/>
            <person name="Doup L.E."/>
            <person name="Downes M."/>
            <person name="Dugan-Rocha S."/>
            <person name="Dunkov B.C."/>
            <person name="Dunn P."/>
            <person name="Durbin K.J."/>
            <person name="Evangelista C.C."/>
            <person name="Ferraz C."/>
            <person name="Ferriera S."/>
            <person name="Fleischmann W."/>
            <person name="Fosler C."/>
            <person name="Gabrielian A.E."/>
            <person name="Garg N.S."/>
            <person name="Gelbart W.M."/>
            <person name="Glasser K."/>
            <person name="Glodek A."/>
            <person name="Gong F."/>
            <person name="Gorrell J.H."/>
            <person name="Gu Z."/>
            <person name="Guan P."/>
            <person name="Harris M."/>
            <person name="Harris N.L."/>
            <person name="Harvey D.A."/>
            <person name="Heiman T.J."/>
            <person name="Hernandez J.R."/>
            <person name="Houck J."/>
            <person name="Hostin D."/>
            <person name="Houston K.A."/>
            <person name="Howland T.J."/>
            <person name="Wei M.-H."/>
            <person name="Ibegwam C."/>
            <person name="Jalali M."/>
            <person name="Kalush F."/>
            <person name="Karpen G.H."/>
            <person name="Ke Z."/>
            <person name="Kennison J.A."/>
            <person name="Ketchum K.A."/>
            <person name="Kimmel B.E."/>
            <person name="Kodira C.D."/>
            <person name="Kraft C.L."/>
            <person name="Kravitz S."/>
            <person name="Kulp D."/>
            <person name="Lai Z."/>
            <person name="Lasko P."/>
            <person name="Lei Y."/>
            <person name="Levitsky A.A."/>
            <person name="Li J.H."/>
            <person name="Li Z."/>
            <person name="Liang Y."/>
            <person name="Lin X."/>
            <person name="Liu X."/>
            <person name="Mattei B."/>
            <person name="McIntosh T.C."/>
            <person name="McLeod M.P."/>
            <person name="McPherson D."/>
            <person name="Merkulov G."/>
            <person name="Milshina N.V."/>
            <person name="Mobarry C."/>
            <person name="Morris J."/>
            <person name="Moshrefi A."/>
            <person name="Mount S.M."/>
            <person name="Moy M."/>
            <person name="Murphy B."/>
            <person name="Murphy L."/>
            <person name="Muzny D.M."/>
            <person name="Nelson D.L."/>
            <person name="Nelson D.R."/>
            <person name="Nelson K.A."/>
            <person name="Nixon K."/>
            <person name="Nusskern D.R."/>
            <person name="Pacleb J.M."/>
            <person name="Palazzolo M."/>
            <person name="Pittman G.S."/>
            <person name="Pan S."/>
            <person name="Pollard J."/>
            <person name="Puri V."/>
            <person name="Reese M.G."/>
            <person name="Reinert K."/>
            <person name="Remington K."/>
            <person name="Saunders R.D.C."/>
            <person name="Scheeler F."/>
            <person name="Shen H."/>
            <person name="Shue B.C."/>
            <person name="Siden-Kiamos I."/>
            <person name="Simpson M."/>
            <person name="Skupski M.P."/>
            <person name="Smith T.J."/>
            <person name="Spier E."/>
            <person name="Spradling A.C."/>
            <person name="Stapleton M."/>
            <person name="Strong R."/>
            <person name="Sun E."/>
            <person name="Svirskas R."/>
            <person name="Tector C."/>
            <person name="Turner R."/>
            <person name="Venter E."/>
            <person name="Wang A.H."/>
            <person name="Wang X."/>
            <person name="Wang Z.-Y."/>
            <person name="Wassarman D.A."/>
            <person name="Weinstock G.M."/>
            <person name="Weissenbach J."/>
            <person name="Williams S.M."/>
            <person name="Woodage T."/>
            <person name="Worley K.C."/>
            <person name="Wu D."/>
            <person name="Yang S."/>
            <person name="Yao Q.A."/>
            <person name="Ye J."/>
            <person name="Yeh R.-F."/>
            <person name="Zaveri J.S."/>
            <person name="Zhan M."/>
            <person name="Zhang G."/>
            <person name="Zhao Q."/>
            <person name="Zheng L."/>
            <person name="Zheng X.H."/>
            <person name="Zhong F.N."/>
            <person name="Zhong W."/>
            <person name="Zhou X."/>
            <person name="Zhu S.C."/>
            <person name="Zhu X."/>
            <person name="Smith H.O."/>
            <person name="Gibbs R.A."/>
            <person name="Myers E.W."/>
            <person name="Rubin G.M."/>
            <person name="Venter J.C."/>
        </authorList>
    </citation>
    <scope>NUCLEOTIDE SEQUENCE [LARGE SCALE GENOMIC DNA]</scope>
    <source>
        <strain evidence="3">Berkeley</strain>
    </source>
</reference>
<reference key="3">
    <citation type="journal article" date="2002" name="Genome Biol.">
        <title>Annotation of the Drosophila melanogaster euchromatic genome: a systematic review.</title>
        <authorList>
            <person name="Misra S."/>
            <person name="Crosby M.A."/>
            <person name="Mungall C.J."/>
            <person name="Matthews B.B."/>
            <person name="Campbell K.S."/>
            <person name="Hradecky P."/>
            <person name="Huang Y."/>
            <person name="Kaminker J.S."/>
            <person name="Millburn G.H."/>
            <person name="Prochnik S.E."/>
            <person name="Smith C.D."/>
            <person name="Tupy J.L."/>
            <person name="Whitfield E.J."/>
            <person name="Bayraktaroglu L."/>
            <person name="Berman B.P."/>
            <person name="Bettencourt B.R."/>
            <person name="Celniker S.E."/>
            <person name="de Grey A.D.N.J."/>
            <person name="Drysdale R.A."/>
            <person name="Harris N.L."/>
            <person name="Richter J."/>
            <person name="Russo S."/>
            <person name="Schroeder A.J."/>
            <person name="Shu S.Q."/>
            <person name="Stapleton M."/>
            <person name="Yamada C."/>
            <person name="Ashburner M."/>
            <person name="Gelbart W.M."/>
            <person name="Rubin G.M."/>
            <person name="Lewis S.E."/>
        </authorList>
    </citation>
    <scope>GENOME REANNOTATION</scope>
    <source>
        <strain>Berkeley</strain>
    </source>
</reference>
<reference evidence="6" key="4">
    <citation type="journal article" date="2002" name="Genome Biol.">
        <title>A Drosophila full-length cDNA resource.</title>
        <authorList>
            <person name="Stapleton M."/>
            <person name="Carlson J.W."/>
            <person name="Brokstein P."/>
            <person name="Yu C."/>
            <person name="Champe M."/>
            <person name="George R.A."/>
            <person name="Guarin H."/>
            <person name="Kronmiller B."/>
            <person name="Pacleb J.M."/>
            <person name="Park S."/>
            <person name="Wan K.H."/>
            <person name="Rubin G.M."/>
            <person name="Celniker S.E."/>
        </authorList>
    </citation>
    <scope>NUCLEOTIDE SEQUENCE [LARGE SCALE MRNA]</scope>
    <source>
        <strain evidence="4">Berkeley</strain>
        <tissue evidence="4">Embryo</tissue>
        <tissue evidence="4">Ovary</tissue>
    </source>
</reference>
<reference key="5">
    <citation type="submission" date="2008-11" db="EMBL/GenBank/DDBJ databases">
        <authorList>
            <person name="Carlson J.W."/>
            <person name="Booth B."/>
            <person name="Frise E."/>
            <person name="Park S."/>
            <person name="Wan K.H."/>
            <person name="Yu C."/>
            <person name="Celniker S.E."/>
        </authorList>
    </citation>
    <scope>NUCLEOTIDE SEQUENCE [LARGE SCALE MRNA]</scope>
    <source>
        <strain>Berkeley</strain>
    </source>
</reference>
<sequence>MLSQLPLFAGGEIVRGFGRGSKELGIPTANFPLEVVKSLPESLPTGAYYGWANVDNGPVHKMVLSIGWNPFYNNKEKSVETHMLHDFNCDLYGQTLKICIVGYLRPERSFDSLESLIAAIRGDIEQAKAFLDEADKAKLKEAPFFTEKLCSSK</sequence>
<gene>
    <name evidence="8" type="primary">Rfk</name>
    <name evidence="8" type="ORF">CG2846</name>
</gene>
<name>RIFK_DROME</name>
<comment type="function">
    <text evidence="2">Catalyzes the phosphorylation of riboflavin (vitamin B2) to form flavin-mononucleotide (FMN).</text>
</comment>
<comment type="catalytic activity">
    <reaction evidence="2">
        <text>riboflavin + ATP = FMN + ADP + H(+)</text>
        <dbReference type="Rhea" id="RHEA:14357"/>
        <dbReference type="ChEBI" id="CHEBI:15378"/>
        <dbReference type="ChEBI" id="CHEBI:30616"/>
        <dbReference type="ChEBI" id="CHEBI:57986"/>
        <dbReference type="ChEBI" id="CHEBI:58210"/>
        <dbReference type="ChEBI" id="CHEBI:456216"/>
        <dbReference type="EC" id="2.7.1.26"/>
    </reaction>
</comment>
<comment type="cofactor">
    <cofactor evidence="1">
        <name>Zn(2+)</name>
        <dbReference type="ChEBI" id="CHEBI:29105"/>
    </cofactor>
    <cofactor evidence="1">
        <name>Mg(2+)</name>
        <dbReference type="ChEBI" id="CHEBI:18420"/>
    </cofactor>
    <text evidence="1">Zinc or magnesium.</text>
</comment>
<comment type="pathway">
    <text>Cofactor biosynthesis; FMN biosynthesis; FMN from riboflavin (ATP route): step 1/1.</text>
</comment>
<comment type="subunit">
    <text evidence="2">Monomer.</text>
</comment>
<comment type="subcellular location">
    <subcellularLocation>
        <location evidence="1">Cytoplasm</location>
    </subcellularLocation>
</comment>
<feature type="chain" id="PRO_0000194150" description="Putative riboflavin kinase">
    <location>
        <begin position="1"/>
        <end position="153"/>
    </location>
</feature>
<feature type="active site" description="Nucleophile" evidence="1">
    <location>
        <position position="80"/>
    </location>
</feature>
<feature type="binding site" evidence="2">
    <location>
        <position position="28"/>
    </location>
    <ligand>
        <name>Mg(2+)</name>
        <dbReference type="ChEBI" id="CHEBI:18420"/>
    </ligand>
</feature>
<feature type="binding site" evidence="2">
    <location>
        <position position="30"/>
    </location>
    <ligand>
        <name>Mg(2+)</name>
        <dbReference type="ChEBI" id="CHEBI:18420"/>
    </ligand>
</feature>
<feature type="sequence conflict" description="In Ref. 4; AAL28446." evidence="6" ref="4">
    <original>L</original>
    <variation>M</variation>
    <location>
        <position position="24"/>
    </location>
</feature>
<keyword id="KW-0067">ATP-binding</keyword>
<keyword id="KW-0963">Cytoplasm</keyword>
<keyword id="KW-0285">Flavoprotein</keyword>
<keyword id="KW-0288">FMN</keyword>
<keyword id="KW-0418">Kinase</keyword>
<keyword id="KW-0460">Magnesium</keyword>
<keyword id="KW-0479">Metal-binding</keyword>
<keyword id="KW-0547">Nucleotide-binding</keyword>
<keyword id="KW-1185">Reference proteome</keyword>
<keyword id="KW-0808">Transferase</keyword>
<keyword id="KW-0862">Zinc</keyword>
<accession>O76206</accession>
<accession>B6IDS5</accession>
<accession>Q95S97</accession>
<evidence type="ECO:0000250" key="1"/>
<evidence type="ECO:0000250" key="2">
    <source>
        <dbReference type="UniProtKB" id="Q969G6"/>
    </source>
</evidence>
<evidence type="ECO:0000269" key="3">
    <source>
    </source>
</evidence>
<evidence type="ECO:0000269" key="4">
    <source>
    </source>
</evidence>
<evidence type="ECO:0000269" key="5">
    <source>
    </source>
</evidence>
<evidence type="ECO:0000305" key="6"/>
<evidence type="ECO:0000312" key="7">
    <source>
        <dbReference type="EMBL" id="AAL28446.1"/>
    </source>
</evidence>
<evidence type="ECO:0000312" key="8">
    <source>
        <dbReference type="FlyBase" id="FBgn0014930"/>
    </source>
</evidence>
<proteinExistence type="evidence at transcript level"/>
<organism evidence="7">
    <name type="scientific">Drosophila melanogaster</name>
    <name type="common">Fruit fly</name>
    <dbReference type="NCBI Taxonomy" id="7227"/>
    <lineage>
        <taxon>Eukaryota</taxon>
        <taxon>Metazoa</taxon>
        <taxon>Ecdysozoa</taxon>
        <taxon>Arthropoda</taxon>
        <taxon>Hexapoda</taxon>
        <taxon>Insecta</taxon>
        <taxon>Pterygota</taxon>
        <taxon>Neoptera</taxon>
        <taxon>Endopterygota</taxon>
        <taxon>Diptera</taxon>
        <taxon>Brachycera</taxon>
        <taxon>Muscomorpha</taxon>
        <taxon>Ephydroidea</taxon>
        <taxon>Drosophilidae</taxon>
        <taxon>Drosophila</taxon>
        <taxon>Sophophora</taxon>
    </lineage>
</organism>